<organism>
    <name type="scientific">Brucella ovis (strain ATCC 25840 / 63/290 / NCTC 10512)</name>
    <dbReference type="NCBI Taxonomy" id="444178"/>
    <lineage>
        <taxon>Bacteria</taxon>
        <taxon>Pseudomonadati</taxon>
        <taxon>Pseudomonadota</taxon>
        <taxon>Alphaproteobacteria</taxon>
        <taxon>Hyphomicrobiales</taxon>
        <taxon>Brucellaceae</taxon>
        <taxon>Brucella/Ochrobactrum group</taxon>
        <taxon>Brucella</taxon>
    </lineage>
</organism>
<proteinExistence type="inferred from homology"/>
<reference key="1">
    <citation type="journal article" date="2009" name="PLoS ONE">
        <title>Genome degradation in Brucella ovis corresponds with narrowing of its host range and tissue tropism.</title>
        <authorList>
            <person name="Tsolis R.M."/>
            <person name="Seshadri R."/>
            <person name="Santos R.L."/>
            <person name="Sangari F.J."/>
            <person name="Lobo J.M."/>
            <person name="de Jong M.F."/>
            <person name="Ren Q."/>
            <person name="Myers G."/>
            <person name="Brinkac L.M."/>
            <person name="Nelson W.C."/>
            <person name="Deboy R.T."/>
            <person name="Angiuoli S."/>
            <person name="Khouri H."/>
            <person name="Dimitrov G."/>
            <person name="Robinson J.R."/>
            <person name="Mulligan S."/>
            <person name="Walker R.L."/>
            <person name="Elzer P.E."/>
            <person name="Hassan K.A."/>
            <person name="Paulsen I.T."/>
        </authorList>
    </citation>
    <scope>NUCLEOTIDE SEQUENCE [LARGE SCALE GENOMIC DNA]</scope>
    <source>
        <strain>ATCC 25840 / 63/290 / NCTC 10512</strain>
    </source>
</reference>
<accession>A5VRG8</accession>
<sequence length="286" mass="30853">MNAYQKTIGRAVTLSGVGVHGGAPASARLLPADADTGILFQRSDIKDSAPVCAHVSQIGATDLCTSLGAREARIDTVEHLMAAISALGIDNLVVEIEGPEVPILDGTSARFIEAVDSVGVVTQDAKRRFIRILKTVRVEAGNSWGEFRPYDGTRFEVEIDFECPLIGRQKFAHDVDEETFRKELSTARTFGFMKDVERLWAAGLALGASLDNSLVIGDDNSIVNADGLRFKDEFVRHKTLDAVGDLALAGLPFIGCFSSYRGGHRLNSEAVKALLSDETAFEIIEA</sequence>
<comment type="function">
    <text evidence="1">Catalyzes the hydrolysis of UDP-3-O-myristoyl-N-acetylglucosamine to form UDP-3-O-myristoylglucosamine and acetate, the committed step in lipid A biosynthesis.</text>
</comment>
<comment type="catalytic activity">
    <reaction evidence="1">
        <text>a UDP-3-O-[(3R)-3-hydroxyacyl]-N-acetyl-alpha-D-glucosamine + H2O = a UDP-3-O-[(3R)-3-hydroxyacyl]-alpha-D-glucosamine + acetate</text>
        <dbReference type="Rhea" id="RHEA:67816"/>
        <dbReference type="ChEBI" id="CHEBI:15377"/>
        <dbReference type="ChEBI" id="CHEBI:30089"/>
        <dbReference type="ChEBI" id="CHEBI:137740"/>
        <dbReference type="ChEBI" id="CHEBI:173225"/>
        <dbReference type="EC" id="3.5.1.108"/>
    </reaction>
</comment>
<comment type="cofactor">
    <cofactor evidence="1">
        <name>Zn(2+)</name>
        <dbReference type="ChEBI" id="CHEBI:29105"/>
    </cofactor>
</comment>
<comment type="pathway">
    <text evidence="1">Glycolipid biosynthesis; lipid IV(A) biosynthesis; lipid IV(A) from (3R)-3-hydroxytetradecanoyl-[acyl-carrier-protein] and UDP-N-acetyl-alpha-D-glucosamine: step 2/6.</text>
</comment>
<comment type="similarity">
    <text evidence="1">Belongs to the LpxC family.</text>
</comment>
<keyword id="KW-0378">Hydrolase</keyword>
<keyword id="KW-0441">Lipid A biosynthesis</keyword>
<keyword id="KW-0444">Lipid biosynthesis</keyword>
<keyword id="KW-0443">Lipid metabolism</keyword>
<keyword id="KW-0479">Metal-binding</keyword>
<keyword id="KW-0862">Zinc</keyword>
<dbReference type="EC" id="3.5.1.108" evidence="1"/>
<dbReference type="EMBL" id="CP000708">
    <property type="protein sequence ID" value="ABQ60855.1"/>
    <property type="molecule type" value="Genomic_DNA"/>
</dbReference>
<dbReference type="RefSeq" id="WP_002964532.1">
    <property type="nucleotide sequence ID" value="NC_009505.1"/>
</dbReference>
<dbReference type="SMR" id="A5VRG8"/>
<dbReference type="GeneID" id="97533370"/>
<dbReference type="KEGG" id="bov:BOV_1379"/>
<dbReference type="HOGENOM" id="CLU_046528_1_1_5"/>
<dbReference type="PhylomeDB" id="A5VRG8"/>
<dbReference type="UniPathway" id="UPA00359">
    <property type="reaction ID" value="UER00478"/>
</dbReference>
<dbReference type="Proteomes" id="UP000006383">
    <property type="component" value="Chromosome I"/>
</dbReference>
<dbReference type="GO" id="GO:0016020">
    <property type="term" value="C:membrane"/>
    <property type="evidence" value="ECO:0007669"/>
    <property type="project" value="GOC"/>
</dbReference>
<dbReference type="GO" id="GO:0046872">
    <property type="term" value="F:metal ion binding"/>
    <property type="evidence" value="ECO:0007669"/>
    <property type="project" value="UniProtKB-KW"/>
</dbReference>
<dbReference type="GO" id="GO:0103117">
    <property type="term" value="F:UDP-3-O-acyl-N-acetylglucosamine deacetylase activity"/>
    <property type="evidence" value="ECO:0007669"/>
    <property type="project" value="UniProtKB-UniRule"/>
</dbReference>
<dbReference type="GO" id="GO:0009245">
    <property type="term" value="P:lipid A biosynthetic process"/>
    <property type="evidence" value="ECO:0007669"/>
    <property type="project" value="UniProtKB-UniRule"/>
</dbReference>
<dbReference type="Gene3D" id="3.30.230.20">
    <property type="entry name" value="lpxc deacetylase, domain 1"/>
    <property type="match status" value="1"/>
</dbReference>
<dbReference type="Gene3D" id="3.30.1700.10">
    <property type="entry name" value="lpxc deacetylase, domain 2"/>
    <property type="match status" value="1"/>
</dbReference>
<dbReference type="HAMAP" id="MF_00388">
    <property type="entry name" value="LpxC"/>
    <property type="match status" value="1"/>
</dbReference>
<dbReference type="InterPro" id="IPR020568">
    <property type="entry name" value="Ribosomal_Su5_D2-typ_SF"/>
</dbReference>
<dbReference type="InterPro" id="IPR004463">
    <property type="entry name" value="UDP-acyl_GlcNac_deAcase"/>
</dbReference>
<dbReference type="InterPro" id="IPR011334">
    <property type="entry name" value="UDP-acyl_GlcNac_deAcase_C"/>
</dbReference>
<dbReference type="InterPro" id="IPR015870">
    <property type="entry name" value="UDP-acyl_N-AcGlcN_deAcase_N"/>
</dbReference>
<dbReference type="NCBIfam" id="TIGR00325">
    <property type="entry name" value="lpxC"/>
    <property type="match status" value="1"/>
</dbReference>
<dbReference type="PANTHER" id="PTHR33694">
    <property type="entry name" value="UDP-3-O-ACYL-N-ACETYLGLUCOSAMINE DEACETYLASE 1, MITOCHONDRIAL-RELATED"/>
    <property type="match status" value="1"/>
</dbReference>
<dbReference type="PANTHER" id="PTHR33694:SF1">
    <property type="entry name" value="UDP-3-O-ACYL-N-ACETYLGLUCOSAMINE DEACETYLASE 1, MITOCHONDRIAL-RELATED"/>
    <property type="match status" value="1"/>
</dbReference>
<dbReference type="Pfam" id="PF03331">
    <property type="entry name" value="LpxC"/>
    <property type="match status" value="1"/>
</dbReference>
<dbReference type="SUPFAM" id="SSF54211">
    <property type="entry name" value="Ribosomal protein S5 domain 2-like"/>
    <property type="match status" value="2"/>
</dbReference>
<protein>
    <recommendedName>
        <fullName evidence="1">UDP-3-O-acyl-N-acetylglucosamine deacetylase</fullName>
        <shortName evidence="1">UDP-3-O-acyl-GlcNAc deacetylase</shortName>
        <ecNumber evidence="1">3.5.1.108</ecNumber>
    </recommendedName>
    <alternativeName>
        <fullName evidence="1">UDP-3-O-[R-3-hydroxymyristoyl]-N-acetylglucosamine deacetylase</fullName>
    </alternativeName>
</protein>
<feature type="chain" id="PRO_1000122763" description="UDP-3-O-acyl-N-acetylglucosamine deacetylase">
    <location>
        <begin position="1"/>
        <end position="286"/>
    </location>
</feature>
<feature type="active site" description="Proton donor" evidence="1">
    <location>
        <position position="264"/>
    </location>
</feature>
<feature type="binding site" evidence="1">
    <location>
        <position position="79"/>
    </location>
    <ligand>
        <name>Zn(2+)</name>
        <dbReference type="ChEBI" id="CHEBI:29105"/>
    </ligand>
</feature>
<feature type="binding site" evidence="1">
    <location>
        <position position="237"/>
    </location>
    <ligand>
        <name>Zn(2+)</name>
        <dbReference type="ChEBI" id="CHEBI:29105"/>
    </ligand>
</feature>
<feature type="binding site" evidence="1">
    <location>
        <position position="241"/>
    </location>
    <ligand>
        <name>Zn(2+)</name>
        <dbReference type="ChEBI" id="CHEBI:29105"/>
    </ligand>
</feature>
<evidence type="ECO:0000255" key="1">
    <source>
        <dbReference type="HAMAP-Rule" id="MF_00388"/>
    </source>
</evidence>
<name>LPXC_BRUO2</name>
<gene>
    <name evidence="1" type="primary">lpxC</name>
    <name type="ordered locus">BOV_1379</name>
</gene>